<protein>
    <recommendedName>
        <fullName evidence="1">Redox-sensing transcriptional repressor Rex</fullName>
    </recommendedName>
</protein>
<accession>Q73ES3</accession>
<feature type="chain" id="PRO_1000065385" description="Redox-sensing transcriptional repressor Rex">
    <location>
        <begin position="1"/>
        <end position="209"/>
    </location>
</feature>
<feature type="DNA-binding region" description="H-T-H motif" evidence="1">
    <location>
        <begin position="16"/>
        <end position="55"/>
    </location>
</feature>
<feature type="binding site" evidence="1">
    <location>
        <begin position="90"/>
        <end position="95"/>
    </location>
    <ligand>
        <name>NAD(+)</name>
        <dbReference type="ChEBI" id="CHEBI:57540"/>
    </ligand>
</feature>
<sequence length="209" mass="23530">MEQQKIPQATAKRLPLYYRFIQNLSLSGKQRVSSAELSEAVKVDSATIRRDFSYFGALGKKGYGYNVNYLLSFFRETLDQDDITRVALIGVGNLGTAFLHYNFTKNNNTKIEMAFDVSEEKVGTEIGGIPVYHLDELEERLSTDIQVAILTVPATVAQSVADRLAETNVHGILNFTPARLNVSENIRIHHIDLAVELQTLVYFLKNYPQ</sequence>
<gene>
    <name evidence="1" type="primary">rex</name>
    <name type="ordered locus">BCE_0285</name>
</gene>
<reference key="1">
    <citation type="journal article" date="2004" name="Nucleic Acids Res.">
        <title>The genome sequence of Bacillus cereus ATCC 10987 reveals metabolic adaptations and a large plasmid related to Bacillus anthracis pXO1.</title>
        <authorList>
            <person name="Rasko D.A."/>
            <person name="Ravel J."/>
            <person name="Oekstad O.A."/>
            <person name="Helgason E."/>
            <person name="Cer R.Z."/>
            <person name="Jiang L."/>
            <person name="Shores K.A."/>
            <person name="Fouts D.E."/>
            <person name="Tourasse N.J."/>
            <person name="Angiuoli S.V."/>
            <person name="Kolonay J.F."/>
            <person name="Nelson W.C."/>
            <person name="Kolstoe A.-B."/>
            <person name="Fraser C.M."/>
            <person name="Read T.D."/>
        </authorList>
    </citation>
    <scope>NUCLEOTIDE SEQUENCE [LARGE SCALE GENOMIC DNA]</scope>
    <source>
        <strain>ATCC 10987 / NRS 248</strain>
    </source>
</reference>
<organism>
    <name type="scientific">Bacillus cereus (strain ATCC 10987 / NRS 248)</name>
    <dbReference type="NCBI Taxonomy" id="222523"/>
    <lineage>
        <taxon>Bacteria</taxon>
        <taxon>Bacillati</taxon>
        <taxon>Bacillota</taxon>
        <taxon>Bacilli</taxon>
        <taxon>Bacillales</taxon>
        <taxon>Bacillaceae</taxon>
        <taxon>Bacillus</taxon>
        <taxon>Bacillus cereus group</taxon>
    </lineage>
</organism>
<evidence type="ECO:0000255" key="1">
    <source>
        <dbReference type="HAMAP-Rule" id="MF_01131"/>
    </source>
</evidence>
<name>REX_BACC1</name>
<dbReference type="EMBL" id="AE017194">
    <property type="protein sequence ID" value="AAS39221.1"/>
    <property type="molecule type" value="Genomic_DNA"/>
</dbReference>
<dbReference type="SMR" id="Q73ES3"/>
<dbReference type="KEGG" id="bca:BCE_0285"/>
<dbReference type="HOGENOM" id="CLU_061534_1_1_9"/>
<dbReference type="Proteomes" id="UP000002527">
    <property type="component" value="Chromosome"/>
</dbReference>
<dbReference type="GO" id="GO:0005737">
    <property type="term" value="C:cytoplasm"/>
    <property type="evidence" value="ECO:0007669"/>
    <property type="project" value="UniProtKB-SubCell"/>
</dbReference>
<dbReference type="GO" id="GO:0003677">
    <property type="term" value="F:DNA binding"/>
    <property type="evidence" value="ECO:0007669"/>
    <property type="project" value="UniProtKB-UniRule"/>
</dbReference>
<dbReference type="GO" id="GO:0003700">
    <property type="term" value="F:DNA-binding transcription factor activity"/>
    <property type="evidence" value="ECO:0007669"/>
    <property type="project" value="UniProtKB-UniRule"/>
</dbReference>
<dbReference type="GO" id="GO:0045892">
    <property type="term" value="P:negative regulation of DNA-templated transcription"/>
    <property type="evidence" value="ECO:0007669"/>
    <property type="project" value="InterPro"/>
</dbReference>
<dbReference type="GO" id="GO:0051775">
    <property type="term" value="P:response to redox state"/>
    <property type="evidence" value="ECO:0007669"/>
    <property type="project" value="InterPro"/>
</dbReference>
<dbReference type="Gene3D" id="3.40.50.720">
    <property type="entry name" value="NAD(P)-binding Rossmann-like Domain"/>
    <property type="match status" value="1"/>
</dbReference>
<dbReference type="Gene3D" id="1.10.10.10">
    <property type="entry name" value="Winged helix-like DNA-binding domain superfamily/Winged helix DNA-binding domain"/>
    <property type="match status" value="1"/>
</dbReference>
<dbReference type="HAMAP" id="MF_01131">
    <property type="entry name" value="Rex"/>
    <property type="match status" value="1"/>
</dbReference>
<dbReference type="InterPro" id="IPR003781">
    <property type="entry name" value="CoA-bd"/>
</dbReference>
<dbReference type="InterPro" id="IPR036291">
    <property type="entry name" value="NAD(P)-bd_dom_sf"/>
</dbReference>
<dbReference type="InterPro" id="IPR009718">
    <property type="entry name" value="Rex_DNA-bd_C_dom"/>
</dbReference>
<dbReference type="InterPro" id="IPR022876">
    <property type="entry name" value="Tscrpt_rep_Rex"/>
</dbReference>
<dbReference type="InterPro" id="IPR036388">
    <property type="entry name" value="WH-like_DNA-bd_sf"/>
</dbReference>
<dbReference type="InterPro" id="IPR036390">
    <property type="entry name" value="WH_DNA-bd_sf"/>
</dbReference>
<dbReference type="NCBIfam" id="NF003989">
    <property type="entry name" value="PRK05472.1-3"/>
    <property type="match status" value="1"/>
</dbReference>
<dbReference type="NCBIfam" id="NF003991">
    <property type="entry name" value="PRK05472.1-5"/>
    <property type="match status" value="1"/>
</dbReference>
<dbReference type="NCBIfam" id="NF003994">
    <property type="entry name" value="PRK05472.2-3"/>
    <property type="match status" value="1"/>
</dbReference>
<dbReference type="NCBIfam" id="NF003995">
    <property type="entry name" value="PRK05472.2-4"/>
    <property type="match status" value="1"/>
</dbReference>
<dbReference type="NCBIfam" id="NF003996">
    <property type="entry name" value="PRK05472.2-5"/>
    <property type="match status" value="1"/>
</dbReference>
<dbReference type="PANTHER" id="PTHR35786">
    <property type="entry name" value="REDOX-SENSING TRANSCRIPTIONAL REPRESSOR REX"/>
    <property type="match status" value="1"/>
</dbReference>
<dbReference type="PANTHER" id="PTHR35786:SF1">
    <property type="entry name" value="REDOX-SENSING TRANSCRIPTIONAL REPRESSOR REX 1"/>
    <property type="match status" value="1"/>
</dbReference>
<dbReference type="Pfam" id="PF02629">
    <property type="entry name" value="CoA_binding"/>
    <property type="match status" value="1"/>
</dbReference>
<dbReference type="Pfam" id="PF06971">
    <property type="entry name" value="Put_DNA-bind_N"/>
    <property type="match status" value="1"/>
</dbReference>
<dbReference type="SMART" id="SM00881">
    <property type="entry name" value="CoA_binding"/>
    <property type="match status" value="1"/>
</dbReference>
<dbReference type="SUPFAM" id="SSF51735">
    <property type="entry name" value="NAD(P)-binding Rossmann-fold domains"/>
    <property type="match status" value="1"/>
</dbReference>
<dbReference type="SUPFAM" id="SSF46785">
    <property type="entry name" value="Winged helix' DNA-binding domain"/>
    <property type="match status" value="1"/>
</dbReference>
<proteinExistence type="inferred from homology"/>
<comment type="function">
    <text evidence="1">Modulates transcription in response to changes in cellular NADH/NAD(+) redox state.</text>
</comment>
<comment type="subunit">
    <text evidence="1">Homodimer.</text>
</comment>
<comment type="subcellular location">
    <subcellularLocation>
        <location evidence="1">Cytoplasm</location>
    </subcellularLocation>
</comment>
<comment type="similarity">
    <text evidence="1">Belongs to the transcriptional regulatory Rex family.</text>
</comment>
<keyword id="KW-0963">Cytoplasm</keyword>
<keyword id="KW-0238">DNA-binding</keyword>
<keyword id="KW-0520">NAD</keyword>
<keyword id="KW-0678">Repressor</keyword>
<keyword id="KW-0804">Transcription</keyword>
<keyword id="KW-0805">Transcription regulation</keyword>